<evidence type="ECO:0000255" key="1">
    <source>
        <dbReference type="HAMAP-Rule" id="MF_01179"/>
    </source>
</evidence>
<feature type="chain" id="PRO_0000343985" description="Cell division inhibitor SulA">
    <location>
        <begin position="1"/>
        <end position="168"/>
    </location>
</feature>
<feature type="region of interest" description="FtsZ binding" evidence="1">
    <location>
        <begin position="106"/>
        <end position="112"/>
    </location>
</feature>
<feature type="region of interest" description="Lon protease binding" evidence="1">
    <location>
        <begin position="161"/>
        <end position="168"/>
    </location>
</feature>
<feature type="site" description="Essential for degradation by Lon protease" evidence="1">
    <location>
        <position position="168"/>
    </location>
</feature>
<name>SULA_YERP3</name>
<sequence>MRTQSLKPYHANYHSLTTNDSPARVDAPTDSGLISEFVYSENQPVVTQLLLPLLQQLSKQSRWLLWLTPQQKLSRSWLKQSGLPINKVVQLRQINPLSTVEAMEKALLTGNYSVVLGWLPELTEDDRIRLRLAAKLGNAYGFVMRPLNDTKVGSGQCATLKIHSYLYH</sequence>
<dbReference type="EMBL" id="CP000720">
    <property type="protein sequence ID" value="ABS47199.1"/>
    <property type="molecule type" value="Genomic_DNA"/>
</dbReference>
<dbReference type="RefSeq" id="WP_011192069.1">
    <property type="nucleotide sequence ID" value="NC_009708.1"/>
</dbReference>
<dbReference type="SMR" id="A7FJS7"/>
<dbReference type="KEGG" id="ypi:YpsIP31758_2540"/>
<dbReference type="HOGENOM" id="CLU_118972_1_0_6"/>
<dbReference type="Proteomes" id="UP000002412">
    <property type="component" value="Chromosome"/>
</dbReference>
<dbReference type="GO" id="GO:0000917">
    <property type="term" value="P:division septum assembly"/>
    <property type="evidence" value="ECO:0007669"/>
    <property type="project" value="UniProtKB-KW"/>
</dbReference>
<dbReference type="GO" id="GO:0006281">
    <property type="term" value="P:DNA repair"/>
    <property type="evidence" value="ECO:0007669"/>
    <property type="project" value="TreeGrafter"/>
</dbReference>
<dbReference type="GO" id="GO:0051782">
    <property type="term" value="P:negative regulation of cell division"/>
    <property type="evidence" value="ECO:0007669"/>
    <property type="project" value="UniProtKB-UniRule"/>
</dbReference>
<dbReference type="GO" id="GO:0009432">
    <property type="term" value="P:SOS response"/>
    <property type="evidence" value="ECO:0007669"/>
    <property type="project" value="UniProtKB-UniRule"/>
</dbReference>
<dbReference type="FunFam" id="3.40.50.300:FF:000417">
    <property type="entry name" value="Cell division inhibitor SulA"/>
    <property type="match status" value="1"/>
</dbReference>
<dbReference type="Gene3D" id="3.40.50.300">
    <property type="entry name" value="P-loop containing nucleotide triphosphate hydrolases"/>
    <property type="match status" value="1"/>
</dbReference>
<dbReference type="HAMAP" id="MF_01179">
    <property type="entry name" value="SulA"/>
    <property type="match status" value="1"/>
</dbReference>
<dbReference type="InterPro" id="IPR004596">
    <property type="entry name" value="Cell_div_suppressor_SulA"/>
</dbReference>
<dbReference type="InterPro" id="IPR027417">
    <property type="entry name" value="P-loop_NTPase"/>
</dbReference>
<dbReference type="InterPro" id="IPR050356">
    <property type="entry name" value="SulA_CellDiv_inhibitor"/>
</dbReference>
<dbReference type="InterPro" id="IPR047696">
    <property type="entry name" value="SulA_enterobact"/>
</dbReference>
<dbReference type="NCBIfam" id="NF007892">
    <property type="entry name" value="PRK10595.1"/>
    <property type="match status" value="1"/>
</dbReference>
<dbReference type="NCBIfam" id="TIGR00623">
    <property type="entry name" value="SOS_SulA_coli"/>
    <property type="match status" value="1"/>
</dbReference>
<dbReference type="PANTHER" id="PTHR35369">
    <property type="entry name" value="BLR3025 PROTEIN-RELATED"/>
    <property type="match status" value="1"/>
</dbReference>
<dbReference type="PANTHER" id="PTHR35369:SF4">
    <property type="entry name" value="CELL DIVISION INHIBITOR SULA"/>
    <property type="match status" value="1"/>
</dbReference>
<dbReference type="Pfam" id="PF03846">
    <property type="entry name" value="SulA"/>
    <property type="match status" value="1"/>
</dbReference>
<dbReference type="PIRSF" id="PIRSF003093">
    <property type="entry name" value="SulA"/>
    <property type="match status" value="1"/>
</dbReference>
<dbReference type="SUPFAM" id="SSF52540">
    <property type="entry name" value="P-loop containing nucleoside triphosphate hydrolases"/>
    <property type="match status" value="1"/>
</dbReference>
<accession>A7FJS7</accession>
<gene>
    <name evidence="1" type="primary">sulA</name>
    <name type="ordered locus">YpsIP31758_2540</name>
</gene>
<keyword id="KW-0131">Cell cycle</keyword>
<keyword id="KW-0132">Cell division</keyword>
<keyword id="KW-0227">DNA damage</keyword>
<keyword id="KW-0717">Septation</keyword>
<keyword id="KW-0742">SOS response</keyword>
<proteinExistence type="inferred from homology"/>
<comment type="function">
    <text evidence="1">Component of the SOS system and an inhibitor of cell division. Accumulation of SulA causes rapid cessation of cell division and the appearance of long, non-septate filaments. In the presence of GTP, binds a polymerization-competent form of FtsZ in a 1:1 ratio, thus inhibiting FtsZ polymerization and therefore preventing it from participating in the assembly of the Z ring. This mechanism prevents the premature segregation of damaged DNA to daughter cells during cell division.</text>
</comment>
<comment type="subunit">
    <text evidence="1">Interacts with FtsZ.</text>
</comment>
<comment type="induction">
    <text evidence="1">By DNA damage, as part of the SOS response.</text>
</comment>
<comment type="PTM">
    <text evidence="1">Is rapidly cleaved and degraded by the Lon protease once DNA damage is repaired.</text>
</comment>
<comment type="similarity">
    <text evidence="1">Belongs to the SulA family.</text>
</comment>
<reference key="1">
    <citation type="journal article" date="2007" name="PLoS Genet.">
        <title>The complete genome sequence of Yersinia pseudotuberculosis IP31758, the causative agent of Far East scarlet-like fever.</title>
        <authorList>
            <person name="Eppinger M."/>
            <person name="Rosovitz M.J."/>
            <person name="Fricke W.F."/>
            <person name="Rasko D.A."/>
            <person name="Kokorina G."/>
            <person name="Fayolle C."/>
            <person name="Lindler L.E."/>
            <person name="Carniel E."/>
            <person name="Ravel J."/>
        </authorList>
    </citation>
    <scope>NUCLEOTIDE SEQUENCE [LARGE SCALE GENOMIC DNA]</scope>
    <source>
        <strain>IP 31758</strain>
    </source>
</reference>
<protein>
    <recommendedName>
        <fullName evidence="1">Cell division inhibitor SulA</fullName>
    </recommendedName>
</protein>
<organism>
    <name type="scientific">Yersinia pseudotuberculosis serotype O:1b (strain IP 31758)</name>
    <dbReference type="NCBI Taxonomy" id="349747"/>
    <lineage>
        <taxon>Bacteria</taxon>
        <taxon>Pseudomonadati</taxon>
        <taxon>Pseudomonadota</taxon>
        <taxon>Gammaproteobacteria</taxon>
        <taxon>Enterobacterales</taxon>
        <taxon>Yersiniaceae</taxon>
        <taxon>Yersinia</taxon>
    </lineage>
</organism>